<feature type="chain" id="PRO_0000077600" description="Tail attachment protein">
    <location>
        <begin position="1"/>
        <end position="56" status="greater than"/>
    </location>
</feature>
<feature type="non-terminal residue">
    <location>
        <position position="56"/>
    </location>
</feature>
<reference key="1">
    <citation type="journal article" date="1993" name="Gene">
        <title>Sequence analysis of the phage 21 genes for prohead assembly and head completion.</title>
        <authorList>
            <person name="Smith M.P."/>
            <person name="Feiss M."/>
        </authorList>
    </citation>
    <scope>NUCLEOTIDE SEQUENCE [GENOMIC DNA]</scope>
</reference>
<sequence>MRDFQNAFDAALAGVDSTIVEVMGISAQFTSGAQRGGEVHGVFDDPESLGFASSGI</sequence>
<accession>P36274</accession>
<proteinExistence type="predicted"/>
<dbReference type="EMBL" id="M81255">
    <property type="protein sequence ID" value="AAA32348.1"/>
    <property type="molecule type" value="Genomic_DNA"/>
</dbReference>
<dbReference type="SMR" id="P36274"/>
<dbReference type="GO" id="GO:0019028">
    <property type="term" value="C:viral capsid"/>
    <property type="evidence" value="ECO:0007669"/>
    <property type="project" value="UniProtKB-KW"/>
</dbReference>
<dbReference type="Gene3D" id="2.40.10.180">
    <property type="entry name" value="Phage tail proteins"/>
    <property type="match status" value="1"/>
</dbReference>
<dbReference type="InterPro" id="IPR053734">
    <property type="entry name" value="Phage_Head-Tail_Connect_sf"/>
</dbReference>
<dbReference type="SUPFAM" id="SSF69279">
    <property type="entry name" value="Phage tail proteins"/>
    <property type="match status" value="1"/>
</dbReference>
<organism>
    <name type="scientific">Enterobacteria phage P21</name>
    <name type="common">Bacteriophage 21</name>
    <name type="synonym">Bacteriophage P21</name>
    <dbReference type="NCBI Taxonomy" id="10711"/>
    <lineage>
        <taxon>Viruses</taxon>
        <taxon>Duplodnaviria</taxon>
        <taxon>Heunggongvirae</taxon>
        <taxon>Uroviricota</taxon>
        <taxon>Caudoviricetes</taxon>
        <taxon>Lambdavirus</taxon>
        <taxon>Lambdavirus lambda</taxon>
    </lineage>
</organism>
<name>VG08_BPP21</name>
<gene>
    <name type="primary">8</name>
</gene>
<protein>
    <recommendedName>
        <fullName>Tail attachment protein</fullName>
    </recommendedName>
    <alternativeName>
        <fullName>Head protein gp8</fullName>
    </alternativeName>
</protein>
<evidence type="ECO:0000305" key="1"/>
<comment type="function">
    <text>Is needed for attachment of the tail to the head.</text>
</comment>
<comment type="subcellular location">
    <subcellularLocation>
        <location evidence="1">Virion</location>
    </subcellularLocation>
</comment>
<organismHost>
    <name type="scientific">Escherichia coli</name>
    <dbReference type="NCBI Taxonomy" id="562"/>
</organismHost>
<keyword id="KW-0167">Capsid protein</keyword>
<keyword id="KW-0946">Virion</keyword>